<comment type="function">
    <text evidence="1">May be involved in induction of apoptosis in CD4(+) T-cells, but not CD8(+) T-cells or hepatocytes.</text>
</comment>
<comment type="subcellular location">
    <subcellularLocation>
        <location evidence="1">Secreted</location>
    </subcellularLocation>
    <text evidence="1">Secreted by hepatocytes.</text>
</comment>
<comment type="similarity">
    <text evidence="3">Belongs to the UPF0669 family.</text>
</comment>
<comment type="sequence caution" evidence="3">
    <conflict type="erroneous initiation">
        <sequence resource="EMBL-CDS" id="BAB33074"/>
    </conflict>
</comment>
<reference key="1">
    <citation type="submission" date="2001-02" db="EMBL/GenBank/DDBJ databases">
        <authorList>
            <person name="Hashimoto K."/>
            <person name="Osada N."/>
            <person name="Hida M."/>
            <person name="Kusuda J."/>
            <person name="Sugano S."/>
        </authorList>
    </citation>
    <scope>NUCLEOTIDE SEQUENCE [LARGE SCALE MRNA]</scope>
    <source>
        <tissue>Frontal cortex</tissue>
    </source>
</reference>
<dbReference type="EMBL" id="AB056416">
    <property type="protein sequence ID" value="BAB33074.1"/>
    <property type="status" value="ALT_INIT"/>
    <property type="molecule type" value="mRNA"/>
</dbReference>
<dbReference type="RefSeq" id="NP_001274633.1">
    <property type="nucleotide sequence ID" value="NM_001287704.1"/>
</dbReference>
<dbReference type="RefSeq" id="XP_015303873.1">
    <property type="nucleotide sequence ID" value="XM_015448387.1"/>
</dbReference>
<dbReference type="STRING" id="9541.ENSMFAP00000013440"/>
<dbReference type="KEGG" id="mcf:102117591"/>
<dbReference type="CTD" id="128656833"/>
<dbReference type="VEuPathDB" id="HostDB:ENSMFAG00000028968"/>
<dbReference type="eggNOG" id="ENOG502RXJP">
    <property type="taxonomic scope" value="Eukaryota"/>
</dbReference>
<dbReference type="OMA" id="FGETAYS"/>
<dbReference type="Proteomes" id="UP000233100">
    <property type="component" value="Chromosome 4"/>
</dbReference>
<dbReference type="GO" id="GO:0005576">
    <property type="term" value="C:extracellular region"/>
    <property type="evidence" value="ECO:0007669"/>
    <property type="project" value="UniProtKB-SubCell"/>
</dbReference>
<dbReference type="GO" id="GO:0006915">
    <property type="term" value="P:apoptotic process"/>
    <property type="evidence" value="ECO:0007669"/>
    <property type="project" value="UniProtKB-KW"/>
</dbReference>
<dbReference type="InterPro" id="IPR031420">
    <property type="entry name" value="UPF0669"/>
</dbReference>
<dbReference type="PANTHER" id="PTHR31703">
    <property type="entry name" value="UPF0669 PROTEIN C6ORF120"/>
    <property type="match status" value="1"/>
</dbReference>
<dbReference type="PANTHER" id="PTHR31703:SF2">
    <property type="entry name" value="UPF0669 PROTEIN C6ORF120"/>
    <property type="match status" value="1"/>
</dbReference>
<dbReference type="Pfam" id="PF17065">
    <property type="entry name" value="UPF0669"/>
    <property type="match status" value="1"/>
</dbReference>
<evidence type="ECO:0000250" key="1"/>
<evidence type="ECO:0000255" key="2"/>
<evidence type="ECO:0000305" key="3"/>
<keyword id="KW-0053">Apoptosis</keyword>
<keyword id="KW-0325">Glycoprotein</keyword>
<keyword id="KW-1185">Reference proteome</keyword>
<keyword id="KW-0964">Secreted</keyword>
<keyword id="KW-0732">Signal</keyword>
<name>CF120_MACFA</name>
<accession>Q9BGQ6</accession>
<organism>
    <name type="scientific">Macaca fascicularis</name>
    <name type="common">Crab-eating macaque</name>
    <name type="synonym">Cynomolgus monkey</name>
    <dbReference type="NCBI Taxonomy" id="9541"/>
    <lineage>
        <taxon>Eukaryota</taxon>
        <taxon>Metazoa</taxon>
        <taxon>Chordata</taxon>
        <taxon>Craniata</taxon>
        <taxon>Vertebrata</taxon>
        <taxon>Euteleostomi</taxon>
        <taxon>Mammalia</taxon>
        <taxon>Eutheria</taxon>
        <taxon>Euarchontoglires</taxon>
        <taxon>Primates</taxon>
        <taxon>Haplorrhini</taxon>
        <taxon>Catarrhini</taxon>
        <taxon>Cercopithecidae</taxon>
        <taxon>Cercopithecinae</taxon>
        <taxon>Macaca</taxon>
    </lineage>
</organism>
<protein>
    <recommendedName>
        <fullName>UPF0669 protein C6orf120 homolog</fullName>
    </recommendedName>
</protein>
<feature type="signal peptide" evidence="2">
    <location>
        <begin position="1"/>
        <end position="30"/>
    </location>
</feature>
<feature type="chain" id="PRO_0000297663" description="UPF0669 protein C6orf120 homolog">
    <location>
        <begin position="31"/>
        <end position="191"/>
    </location>
</feature>
<feature type="glycosylation site" description="N-linked (GlcNAc...) asparagine" evidence="2">
    <location>
        <position position="53"/>
    </location>
</feature>
<sequence length="191" mass="20902">MAAPRGRAAPWTTALLLLLTSQILSPGSCADEEEVPEEWVLLHVVQGQIGAGNYSYLRLNHEGKIVLRMRSLKGDADLYVSASSLHPSFDDYELQSATCGPDAVSIPAHFRRPVGIGVYGHPSHLESEFEMKVYYDGTVEQHPFGEAAYPADGADAGQKHARAPEDASQEEESVLWTILISVLKLVLEILF</sequence>
<gene>
    <name type="ORF">QflA-14362</name>
</gene>
<proteinExistence type="evidence at transcript level"/>